<keyword id="KW-0488">Methylation</keyword>
<keyword id="KW-0687">Ribonucleoprotein</keyword>
<keyword id="KW-0689">Ribosomal protein</keyword>
<keyword id="KW-0694">RNA-binding</keyword>
<keyword id="KW-0699">rRNA-binding</keyword>
<feature type="chain" id="PRO_1000212765" description="Large ribosomal subunit protein uL11">
    <location>
        <begin position="1"/>
        <end position="141"/>
    </location>
</feature>
<organism>
    <name type="scientific">Clostridium botulinum (strain 657 / Type Ba4)</name>
    <dbReference type="NCBI Taxonomy" id="515621"/>
    <lineage>
        <taxon>Bacteria</taxon>
        <taxon>Bacillati</taxon>
        <taxon>Bacillota</taxon>
        <taxon>Clostridia</taxon>
        <taxon>Eubacteriales</taxon>
        <taxon>Clostridiaceae</taxon>
        <taxon>Clostridium</taxon>
    </lineage>
</organism>
<name>RL11_CLOB6</name>
<reference key="1">
    <citation type="submission" date="2008-05" db="EMBL/GenBank/DDBJ databases">
        <title>Genome sequence of Clostridium botulinum Ba4 strain 657.</title>
        <authorList>
            <person name="Shrivastava S."/>
            <person name="Brown J.L."/>
            <person name="Bruce D."/>
            <person name="Detter C."/>
            <person name="Munk C."/>
            <person name="Smith L.A."/>
            <person name="Smith T.J."/>
            <person name="Sutton G."/>
            <person name="Brettin T.S."/>
        </authorList>
    </citation>
    <scope>NUCLEOTIDE SEQUENCE [LARGE SCALE GENOMIC DNA]</scope>
    <source>
        <strain>657 / Type Ba4</strain>
    </source>
</reference>
<gene>
    <name evidence="1" type="primary">rplK</name>
    <name type="ordered locus">CLJ_B3801</name>
</gene>
<dbReference type="EMBL" id="CP001083">
    <property type="protein sequence ID" value="ACQ53356.1"/>
    <property type="molecule type" value="Genomic_DNA"/>
</dbReference>
<dbReference type="RefSeq" id="WP_003357261.1">
    <property type="nucleotide sequence ID" value="NC_012658.1"/>
</dbReference>
<dbReference type="SMR" id="C3KVR3"/>
<dbReference type="GeneID" id="5186670"/>
<dbReference type="KEGG" id="cbi:CLJ_B3801"/>
<dbReference type="HOGENOM" id="CLU_074237_2_1_9"/>
<dbReference type="Proteomes" id="UP000002333">
    <property type="component" value="Chromosome"/>
</dbReference>
<dbReference type="GO" id="GO:0022625">
    <property type="term" value="C:cytosolic large ribosomal subunit"/>
    <property type="evidence" value="ECO:0007669"/>
    <property type="project" value="TreeGrafter"/>
</dbReference>
<dbReference type="GO" id="GO:0070180">
    <property type="term" value="F:large ribosomal subunit rRNA binding"/>
    <property type="evidence" value="ECO:0007669"/>
    <property type="project" value="UniProtKB-UniRule"/>
</dbReference>
<dbReference type="GO" id="GO:0003735">
    <property type="term" value="F:structural constituent of ribosome"/>
    <property type="evidence" value="ECO:0007669"/>
    <property type="project" value="InterPro"/>
</dbReference>
<dbReference type="GO" id="GO:0006412">
    <property type="term" value="P:translation"/>
    <property type="evidence" value="ECO:0007669"/>
    <property type="project" value="UniProtKB-UniRule"/>
</dbReference>
<dbReference type="CDD" id="cd00349">
    <property type="entry name" value="Ribosomal_L11"/>
    <property type="match status" value="1"/>
</dbReference>
<dbReference type="FunFam" id="1.10.10.250:FF:000001">
    <property type="entry name" value="50S ribosomal protein L11"/>
    <property type="match status" value="1"/>
</dbReference>
<dbReference type="FunFam" id="3.30.1550.10:FF:000001">
    <property type="entry name" value="50S ribosomal protein L11"/>
    <property type="match status" value="1"/>
</dbReference>
<dbReference type="Gene3D" id="1.10.10.250">
    <property type="entry name" value="Ribosomal protein L11, C-terminal domain"/>
    <property type="match status" value="1"/>
</dbReference>
<dbReference type="Gene3D" id="3.30.1550.10">
    <property type="entry name" value="Ribosomal protein L11/L12, N-terminal domain"/>
    <property type="match status" value="1"/>
</dbReference>
<dbReference type="HAMAP" id="MF_00736">
    <property type="entry name" value="Ribosomal_uL11"/>
    <property type="match status" value="1"/>
</dbReference>
<dbReference type="InterPro" id="IPR000911">
    <property type="entry name" value="Ribosomal_uL11"/>
</dbReference>
<dbReference type="InterPro" id="IPR006519">
    <property type="entry name" value="Ribosomal_uL11_bac-typ"/>
</dbReference>
<dbReference type="InterPro" id="IPR020783">
    <property type="entry name" value="Ribosomal_uL11_C"/>
</dbReference>
<dbReference type="InterPro" id="IPR036769">
    <property type="entry name" value="Ribosomal_uL11_C_sf"/>
</dbReference>
<dbReference type="InterPro" id="IPR020784">
    <property type="entry name" value="Ribosomal_uL11_N"/>
</dbReference>
<dbReference type="InterPro" id="IPR036796">
    <property type="entry name" value="Ribosomal_uL11_N_sf"/>
</dbReference>
<dbReference type="NCBIfam" id="TIGR01632">
    <property type="entry name" value="L11_bact"/>
    <property type="match status" value="1"/>
</dbReference>
<dbReference type="PANTHER" id="PTHR11661">
    <property type="entry name" value="60S RIBOSOMAL PROTEIN L12"/>
    <property type="match status" value="1"/>
</dbReference>
<dbReference type="PANTHER" id="PTHR11661:SF1">
    <property type="entry name" value="LARGE RIBOSOMAL SUBUNIT PROTEIN UL11M"/>
    <property type="match status" value="1"/>
</dbReference>
<dbReference type="Pfam" id="PF00298">
    <property type="entry name" value="Ribosomal_L11"/>
    <property type="match status" value="1"/>
</dbReference>
<dbReference type="Pfam" id="PF03946">
    <property type="entry name" value="Ribosomal_L11_N"/>
    <property type="match status" value="1"/>
</dbReference>
<dbReference type="SMART" id="SM00649">
    <property type="entry name" value="RL11"/>
    <property type="match status" value="1"/>
</dbReference>
<dbReference type="SUPFAM" id="SSF54747">
    <property type="entry name" value="Ribosomal L11/L12e N-terminal domain"/>
    <property type="match status" value="1"/>
</dbReference>
<dbReference type="SUPFAM" id="SSF46906">
    <property type="entry name" value="Ribosomal protein L11, C-terminal domain"/>
    <property type="match status" value="1"/>
</dbReference>
<accession>C3KVR3</accession>
<proteinExistence type="inferred from homology"/>
<evidence type="ECO:0000255" key="1">
    <source>
        <dbReference type="HAMAP-Rule" id="MF_00736"/>
    </source>
</evidence>
<evidence type="ECO:0000305" key="2"/>
<sequence length="141" mass="14703">MAKKVVGMIKLQLPAGKASPAPPVGPALGQHGVNIMGFCKEFNAKTANQAGLIIPVVITVYQDRSFSFILKTPPAAVLLKKAAGIESGSGVPNKTKVAKVTKDQIREIAETKMPDLNAGSIETAMSMIAGTARSMGITVEE</sequence>
<comment type="function">
    <text evidence="1">Forms part of the ribosomal stalk which helps the ribosome interact with GTP-bound translation factors.</text>
</comment>
<comment type="subunit">
    <text evidence="1">Part of the ribosomal stalk of the 50S ribosomal subunit. Interacts with L10 and the large rRNA to form the base of the stalk. L10 forms an elongated spine to which L12 dimers bind in a sequential fashion forming a multimeric L10(L12)X complex.</text>
</comment>
<comment type="PTM">
    <text evidence="1">One or more lysine residues are methylated.</text>
</comment>
<comment type="similarity">
    <text evidence="1">Belongs to the universal ribosomal protein uL11 family.</text>
</comment>
<protein>
    <recommendedName>
        <fullName evidence="1">Large ribosomal subunit protein uL11</fullName>
    </recommendedName>
    <alternativeName>
        <fullName evidence="2">50S ribosomal protein L11</fullName>
    </alternativeName>
</protein>